<comment type="function">
    <text evidence="1">ATP-dependent RNA helicase which is a subunit of the eIF4F complex involved in cap recognition and is required for mRNA binding to ribosome. In the current model of translation initiation, eIF4A unwinds RNA secondary structures in the 5'-UTR of mRNAs which is necessary to allow efficient binding of the small ribosomal subunit, and subsequent scanning for the initiator codon (By similarity).</text>
</comment>
<comment type="catalytic activity">
    <reaction>
        <text>ATP + H2O = ADP + phosphate + H(+)</text>
        <dbReference type="Rhea" id="RHEA:13065"/>
        <dbReference type="ChEBI" id="CHEBI:15377"/>
        <dbReference type="ChEBI" id="CHEBI:15378"/>
        <dbReference type="ChEBI" id="CHEBI:30616"/>
        <dbReference type="ChEBI" id="CHEBI:43474"/>
        <dbReference type="ChEBI" id="CHEBI:456216"/>
        <dbReference type="EC" id="3.6.4.13"/>
    </reaction>
</comment>
<comment type="subunit">
    <text evidence="1">Component of the eIF4F complex, which composition varies with external and internal environmental conditions. It is composed of at least eIF4A, eIF4E and eIF4G (By similarity).</text>
</comment>
<comment type="subcellular location">
    <subcellularLocation>
        <location evidence="1">Cytoplasm</location>
    </subcellularLocation>
</comment>
<comment type="domain">
    <text>The Q motif is unique to and characteristic of the DEAD box family of RNA helicases and controls ATP binding and hydrolysis.</text>
</comment>
<comment type="similarity">
    <text evidence="4">Belongs to the DEAD box helicase family. eIF4A subfamily.</text>
</comment>
<reference key="1">
    <citation type="journal article" date="2011" name="PLoS Genet.">
        <title>Genomic analysis of the necrotrophic fungal pathogens Sclerotinia sclerotiorum and Botrytis cinerea.</title>
        <authorList>
            <person name="Amselem J."/>
            <person name="Cuomo C.A."/>
            <person name="van Kan J.A.L."/>
            <person name="Viaud M."/>
            <person name="Benito E.P."/>
            <person name="Couloux A."/>
            <person name="Coutinho P.M."/>
            <person name="de Vries R.P."/>
            <person name="Dyer P.S."/>
            <person name="Fillinger S."/>
            <person name="Fournier E."/>
            <person name="Gout L."/>
            <person name="Hahn M."/>
            <person name="Kohn L."/>
            <person name="Lapalu N."/>
            <person name="Plummer K.M."/>
            <person name="Pradier J.-M."/>
            <person name="Quevillon E."/>
            <person name="Sharon A."/>
            <person name="Simon A."/>
            <person name="ten Have A."/>
            <person name="Tudzynski B."/>
            <person name="Tudzynski P."/>
            <person name="Wincker P."/>
            <person name="Andrew M."/>
            <person name="Anthouard V."/>
            <person name="Beever R.E."/>
            <person name="Beffa R."/>
            <person name="Benoit I."/>
            <person name="Bouzid O."/>
            <person name="Brault B."/>
            <person name="Chen Z."/>
            <person name="Choquer M."/>
            <person name="Collemare J."/>
            <person name="Cotton P."/>
            <person name="Danchin E.G."/>
            <person name="Da Silva C."/>
            <person name="Gautier A."/>
            <person name="Giraud C."/>
            <person name="Giraud T."/>
            <person name="Gonzalez C."/>
            <person name="Grossetete S."/>
            <person name="Gueldener U."/>
            <person name="Henrissat B."/>
            <person name="Howlett B.J."/>
            <person name="Kodira C."/>
            <person name="Kretschmer M."/>
            <person name="Lappartient A."/>
            <person name="Leroch M."/>
            <person name="Levis C."/>
            <person name="Mauceli E."/>
            <person name="Neuveglise C."/>
            <person name="Oeser B."/>
            <person name="Pearson M."/>
            <person name="Poulain J."/>
            <person name="Poussereau N."/>
            <person name="Quesneville H."/>
            <person name="Rascle C."/>
            <person name="Schumacher J."/>
            <person name="Segurens B."/>
            <person name="Sexton A."/>
            <person name="Silva E."/>
            <person name="Sirven C."/>
            <person name="Soanes D.M."/>
            <person name="Talbot N.J."/>
            <person name="Templeton M."/>
            <person name="Yandava C."/>
            <person name="Yarden O."/>
            <person name="Zeng Q."/>
            <person name="Rollins J.A."/>
            <person name="Lebrun M.-H."/>
            <person name="Dickman M."/>
        </authorList>
    </citation>
    <scope>NUCLEOTIDE SEQUENCE [LARGE SCALE GENOMIC DNA]</scope>
    <source>
        <strain>B05.10</strain>
    </source>
</reference>
<reference key="2">
    <citation type="journal article" date="2012" name="Eukaryot. Cell">
        <title>Genome update of Botrytis cinerea strains B05.10 and T4.</title>
        <authorList>
            <person name="Staats M."/>
            <person name="van Kan J.A.L."/>
        </authorList>
    </citation>
    <scope>NUCLEOTIDE SEQUENCE [LARGE SCALE GENOMIC DNA]</scope>
    <scope>GENOME REANNOTATION</scope>
    <source>
        <strain>B05.10</strain>
    </source>
</reference>
<reference key="3">
    <citation type="journal article" date="2017" name="Mol. Plant Pathol.">
        <title>A gapless genome sequence of the fungus Botrytis cinerea.</title>
        <authorList>
            <person name="van Kan J.A.L."/>
            <person name="Stassen J.H.M."/>
            <person name="Mosbach A."/>
            <person name="van der Lee T.A.J."/>
            <person name="Faino L."/>
            <person name="Farmer A.D."/>
            <person name="Papasotiriou D.G."/>
            <person name="Zhou S."/>
            <person name="Seidl M.F."/>
            <person name="Cottam E."/>
            <person name="Edel D."/>
            <person name="Hahn M."/>
            <person name="Schwartz D.C."/>
            <person name="Dietrich R.A."/>
            <person name="Widdison S."/>
            <person name="Scalliet G."/>
        </authorList>
    </citation>
    <scope>NUCLEOTIDE SEQUENCE [LARGE SCALE GENOMIC DNA]</scope>
    <scope>GENOME REANNOTATION</scope>
    <source>
        <strain>B05.10</strain>
    </source>
</reference>
<feature type="chain" id="PRO_0000310171" description="ATP-dependent RNA helicase eIF4A">
    <location>
        <begin position="1"/>
        <end position="398"/>
    </location>
</feature>
<feature type="domain" description="Helicase ATP-binding" evidence="2">
    <location>
        <begin position="56"/>
        <end position="226"/>
    </location>
</feature>
<feature type="domain" description="Helicase C-terminal" evidence="3">
    <location>
        <begin position="237"/>
        <end position="398"/>
    </location>
</feature>
<feature type="short sequence motif" description="Q motif">
    <location>
        <begin position="25"/>
        <end position="53"/>
    </location>
</feature>
<feature type="short sequence motif" description="DEAD box">
    <location>
        <begin position="174"/>
        <end position="177"/>
    </location>
</feature>
<feature type="binding site" evidence="2">
    <location>
        <begin position="69"/>
        <end position="76"/>
    </location>
    <ligand>
        <name>ATP</name>
        <dbReference type="ChEBI" id="CHEBI:30616"/>
    </ligand>
</feature>
<evidence type="ECO:0000250" key="1"/>
<evidence type="ECO:0000255" key="2">
    <source>
        <dbReference type="PROSITE-ProRule" id="PRU00541"/>
    </source>
</evidence>
<evidence type="ECO:0000255" key="3">
    <source>
        <dbReference type="PROSITE-ProRule" id="PRU00542"/>
    </source>
</evidence>
<evidence type="ECO:0000305" key="4"/>
<accession>A6RJ45</accession>
<accession>A0A384J5P0</accession>
<organism>
    <name type="scientific">Botryotinia fuckeliana (strain B05.10)</name>
    <name type="common">Noble rot fungus</name>
    <name type="synonym">Botrytis cinerea</name>
    <dbReference type="NCBI Taxonomy" id="332648"/>
    <lineage>
        <taxon>Eukaryota</taxon>
        <taxon>Fungi</taxon>
        <taxon>Dikarya</taxon>
        <taxon>Ascomycota</taxon>
        <taxon>Pezizomycotina</taxon>
        <taxon>Leotiomycetes</taxon>
        <taxon>Helotiales</taxon>
        <taxon>Sclerotiniaceae</taxon>
        <taxon>Botrytis</taxon>
    </lineage>
</organism>
<dbReference type="EC" id="3.6.4.13"/>
<dbReference type="EMBL" id="CP009805">
    <property type="protein sequence ID" value="ATZ45855.1"/>
    <property type="molecule type" value="Genomic_DNA"/>
</dbReference>
<dbReference type="RefSeq" id="XP_001561381.1">
    <property type="nucleotide sequence ID" value="XM_001561331.1"/>
</dbReference>
<dbReference type="SMR" id="A6RJ45"/>
<dbReference type="EnsemblFungi" id="Bcin01g05590.1">
    <property type="protein sequence ID" value="Bcin01p05590.1"/>
    <property type="gene ID" value="Bcin01g05590"/>
</dbReference>
<dbReference type="GeneID" id="5442029"/>
<dbReference type="KEGG" id="bfu:BCIN_01g05590"/>
<dbReference type="VEuPathDB" id="FungiDB:Bcin01g05590"/>
<dbReference type="OMA" id="FGCQALV"/>
<dbReference type="OrthoDB" id="10265785at2759"/>
<dbReference type="Proteomes" id="UP000001798">
    <property type="component" value="Chromosome bcin01"/>
</dbReference>
<dbReference type="GO" id="GO:0005737">
    <property type="term" value="C:cytoplasm"/>
    <property type="evidence" value="ECO:0007669"/>
    <property type="project" value="UniProtKB-SubCell"/>
</dbReference>
<dbReference type="GO" id="GO:0005524">
    <property type="term" value="F:ATP binding"/>
    <property type="evidence" value="ECO:0007669"/>
    <property type="project" value="UniProtKB-KW"/>
</dbReference>
<dbReference type="GO" id="GO:0016887">
    <property type="term" value="F:ATP hydrolysis activity"/>
    <property type="evidence" value="ECO:0007669"/>
    <property type="project" value="RHEA"/>
</dbReference>
<dbReference type="GO" id="GO:0003723">
    <property type="term" value="F:RNA binding"/>
    <property type="evidence" value="ECO:0007669"/>
    <property type="project" value="UniProtKB-KW"/>
</dbReference>
<dbReference type="GO" id="GO:0003724">
    <property type="term" value="F:RNA helicase activity"/>
    <property type="evidence" value="ECO:0007669"/>
    <property type="project" value="UniProtKB-EC"/>
</dbReference>
<dbReference type="GO" id="GO:0003743">
    <property type="term" value="F:translation initiation factor activity"/>
    <property type="evidence" value="ECO:0007669"/>
    <property type="project" value="UniProtKB-KW"/>
</dbReference>
<dbReference type="GO" id="GO:0002183">
    <property type="term" value="P:cytoplasmic translational initiation"/>
    <property type="evidence" value="ECO:0007669"/>
    <property type="project" value="EnsemblFungi"/>
</dbReference>
<dbReference type="CDD" id="cd18046">
    <property type="entry name" value="DEADc_EIF4AII_EIF4AI_DDX2"/>
    <property type="match status" value="1"/>
</dbReference>
<dbReference type="CDD" id="cd18787">
    <property type="entry name" value="SF2_C_DEAD"/>
    <property type="match status" value="1"/>
</dbReference>
<dbReference type="FunFam" id="3.40.50.300:FF:000089">
    <property type="entry name" value="Eukaryotic initiation factor 4A-II"/>
    <property type="match status" value="1"/>
</dbReference>
<dbReference type="FunFam" id="3.40.50.300:FF:000031">
    <property type="entry name" value="Eukaryotic initiation factor 4A-III"/>
    <property type="match status" value="1"/>
</dbReference>
<dbReference type="Gene3D" id="3.40.50.300">
    <property type="entry name" value="P-loop containing nucleotide triphosphate hydrolases"/>
    <property type="match status" value="2"/>
</dbReference>
<dbReference type="InterPro" id="IPR011545">
    <property type="entry name" value="DEAD/DEAH_box_helicase_dom"/>
</dbReference>
<dbReference type="InterPro" id="IPR044728">
    <property type="entry name" value="EIF4A_DEADc"/>
</dbReference>
<dbReference type="InterPro" id="IPR014001">
    <property type="entry name" value="Helicase_ATP-bd"/>
</dbReference>
<dbReference type="InterPro" id="IPR001650">
    <property type="entry name" value="Helicase_C-like"/>
</dbReference>
<dbReference type="InterPro" id="IPR027417">
    <property type="entry name" value="P-loop_NTPase"/>
</dbReference>
<dbReference type="InterPro" id="IPR000629">
    <property type="entry name" value="RNA-helicase_DEAD-box_CS"/>
</dbReference>
<dbReference type="InterPro" id="IPR014014">
    <property type="entry name" value="RNA_helicase_DEAD_Q_motif"/>
</dbReference>
<dbReference type="PANTHER" id="PTHR47958">
    <property type="entry name" value="ATP-DEPENDENT RNA HELICASE DBP3"/>
    <property type="match status" value="1"/>
</dbReference>
<dbReference type="Pfam" id="PF00270">
    <property type="entry name" value="DEAD"/>
    <property type="match status" value="1"/>
</dbReference>
<dbReference type="Pfam" id="PF00271">
    <property type="entry name" value="Helicase_C"/>
    <property type="match status" value="1"/>
</dbReference>
<dbReference type="SMART" id="SM00487">
    <property type="entry name" value="DEXDc"/>
    <property type="match status" value="1"/>
</dbReference>
<dbReference type="SMART" id="SM00490">
    <property type="entry name" value="HELICc"/>
    <property type="match status" value="1"/>
</dbReference>
<dbReference type="SUPFAM" id="SSF52540">
    <property type="entry name" value="P-loop containing nucleoside triphosphate hydrolases"/>
    <property type="match status" value="1"/>
</dbReference>
<dbReference type="PROSITE" id="PS00039">
    <property type="entry name" value="DEAD_ATP_HELICASE"/>
    <property type="match status" value="1"/>
</dbReference>
<dbReference type="PROSITE" id="PS51192">
    <property type="entry name" value="HELICASE_ATP_BIND_1"/>
    <property type="match status" value="1"/>
</dbReference>
<dbReference type="PROSITE" id="PS51194">
    <property type="entry name" value="HELICASE_CTER"/>
    <property type="match status" value="1"/>
</dbReference>
<dbReference type="PROSITE" id="PS51195">
    <property type="entry name" value="Q_MOTIF"/>
    <property type="match status" value="1"/>
</dbReference>
<sequence>MASADKGLEEIQEGQIESNYDETVDSFDTMNLKPELLRGVYAYGFERPSAIQQRAIMPVIKGHDVIAQAQSGTGKTATFSISVLQKLDPNVKQCQALILAPTRELAQQIQKVVVAIGDFMNVECHACIGGTSVRDDMKALQDGPQVVVGTPGRVHDMIQRRFLKTDSMKMFVLDEADEMLSRGFTEQIYDIFQLLPQSTQVVLLSATMPQDVLEVTTKFMRDPVRILVKKAELTLEGIKQFYIAVEKEDWKLDTLSDLYETVTITQAVIFCNTRRKVDWLTDKLTARDFTVSAMHGDMDQGQRDLIMKEFRSGSSRVLIATDLLARGIDVQQVSLVINYDLPANRENYIHRIGRGGRFGRKGVAINFVTADDVRMMREIEQFYSTQIEEMPMNVADLI</sequence>
<protein>
    <recommendedName>
        <fullName>ATP-dependent RNA helicase eIF4A</fullName>
        <ecNumber>3.6.4.13</ecNumber>
    </recommendedName>
    <alternativeName>
        <fullName>Eukaryotic initiation factor 4A</fullName>
        <shortName>eIF-4A</shortName>
    </alternativeName>
    <alternativeName>
        <fullName>Translation initiation factor 1</fullName>
    </alternativeName>
</protein>
<keyword id="KW-0067">ATP-binding</keyword>
<keyword id="KW-0963">Cytoplasm</keyword>
<keyword id="KW-0347">Helicase</keyword>
<keyword id="KW-0378">Hydrolase</keyword>
<keyword id="KW-0396">Initiation factor</keyword>
<keyword id="KW-0547">Nucleotide-binding</keyword>
<keyword id="KW-0648">Protein biosynthesis</keyword>
<keyword id="KW-1185">Reference proteome</keyword>
<keyword id="KW-0694">RNA-binding</keyword>
<proteinExistence type="inferred from homology"/>
<gene>
    <name type="primary">tif1</name>
    <name type="synonym">tif41</name>
    <name type="ORF">BC1G_00466</name>
    <name type="ORF">BCIN_01g05590</name>
</gene>
<name>IF4A_BOTFB</name>